<accession>O43791</accession>
<accession>B2R6S3</accession>
<accession>D3DTW7</accession>
<accession>Q53HJ1</accession>
<evidence type="ECO:0000250" key="1"/>
<evidence type="ECO:0000250" key="2">
    <source>
        <dbReference type="UniProtKB" id="Q6ZWS8"/>
    </source>
</evidence>
<evidence type="ECO:0000255" key="3">
    <source>
        <dbReference type="PROSITE-ProRule" id="PRU00037"/>
    </source>
</evidence>
<evidence type="ECO:0000255" key="4">
    <source>
        <dbReference type="PROSITE-ProRule" id="PRU00129"/>
    </source>
</evidence>
<evidence type="ECO:0000269" key="5">
    <source>
    </source>
</evidence>
<evidence type="ECO:0000269" key="6">
    <source>
    </source>
</evidence>
<evidence type="ECO:0000269" key="7">
    <source>
    </source>
</evidence>
<evidence type="ECO:0000269" key="8">
    <source>
    </source>
</evidence>
<evidence type="ECO:0000269" key="9">
    <source>
    </source>
</evidence>
<evidence type="ECO:0000269" key="10">
    <source>
    </source>
</evidence>
<evidence type="ECO:0000269" key="11">
    <source>
    </source>
</evidence>
<evidence type="ECO:0000269" key="12">
    <source>
    </source>
</evidence>
<evidence type="ECO:0000269" key="13">
    <source>
    </source>
</evidence>
<evidence type="ECO:0000269" key="14">
    <source>
    </source>
</evidence>
<evidence type="ECO:0000269" key="15">
    <source>
    </source>
</evidence>
<evidence type="ECO:0000269" key="16">
    <source>
    </source>
</evidence>
<evidence type="ECO:0000305" key="17"/>
<evidence type="ECO:0000312" key="18">
    <source>
        <dbReference type="HGNC" id="HGNC:11254"/>
    </source>
</evidence>
<evidence type="ECO:0007829" key="19">
    <source>
        <dbReference type="PDB" id="3IVB"/>
    </source>
</evidence>
<evidence type="ECO:0007829" key="20">
    <source>
        <dbReference type="PDB" id="3IVV"/>
    </source>
</evidence>
<evidence type="ECO:0007829" key="21">
    <source>
        <dbReference type="PDB" id="4EOZ"/>
    </source>
</evidence>
<evidence type="ECO:0007829" key="22">
    <source>
        <dbReference type="PDB" id="4HS2"/>
    </source>
</evidence>
<evidence type="ECO:0007829" key="23">
    <source>
        <dbReference type="PDB" id="6F8F"/>
    </source>
</evidence>
<evidence type="ECO:0007829" key="24">
    <source>
        <dbReference type="PDB" id="7LIN"/>
    </source>
</evidence>
<evidence type="ECO:0007829" key="25">
    <source>
        <dbReference type="PDB" id="8DWU"/>
    </source>
</evidence>
<keyword id="KW-0002">3D-structure</keyword>
<keyword id="KW-0963">Cytoplasm</keyword>
<keyword id="KW-0945">Host-virus interaction</keyword>
<keyword id="KW-0991">Intellectual disability</keyword>
<keyword id="KW-0539">Nucleus</keyword>
<keyword id="KW-1267">Proteomics identification</keyword>
<keyword id="KW-1185">Reference proteome</keyword>
<keyword id="KW-0833">Ubl conjugation pathway</keyword>
<proteinExistence type="evidence at protein level"/>
<gene>
    <name evidence="18" type="primary">SPOP</name>
</gene>
<sequence>MSRVPSPPPPAEMSSGPVAESWCYTQIKVVKFSYMWTINNFSFCREEMGEVIKSSTFSSGANDKLKWCLRVNPKGLDEESKDYLSLYLLLVSCPKSEVRAKFKFSILNAKGEETKAMESQRAYRFVQGKDWGFKKFIRRDFLLDEANGLLPDDKLTLFCEVSVVQDSVNISGQNTMNMVKVPECRLADELGGLWENSRFTDCCLCVAGQEFQAHKAILAARSPVFSAMFEHEMEESKKNRVEINDVEPEVFKEMMCFIYTGKAPNLDKMADDLLAAADKYALERLKVMCEDALCSNLSVENAAEILILADLHSADQLKTQAVDFINYHASDVLETSGWKSMVVSHPHLVAEAYRSLASAQCPFLGPPRKRLKQS</sequence>
<dbReference type="EMBL" id="AJ000644">
    <property type="protein sequence ID" value="CAA04199.1"/>
    <property type="molecule type" value="mRNA"/>
</dbReference>
<dbReference type="EMBL" id="AK222589">
    <property type="protein sequence ID" value="BAD96309.1"/>
    <property type="molecule type" value="mRNA"/>
</dbReference>
<dbReference type="EMBL" id="AK312691">
    <property type="protein sequence ID" value="BAG35570.1"/>
    <property type="molecule type" value="mRNA"/>
</dbReference>
<dbReference type="EMBL" id="CH471109">
    <property type="protein sequence ID" value="EAW94671.1"/>
    <property type="molecule type" value="Genomic_DNA"/>
</dbReference>
<dbReference type="EMBL" id="CH471109">
    <property type="protein sequence ID" value="EAW94672.1"/>
    <property type="molecule type" value="Genomic_DNA"/>
</dbReference>
<dbReference type="EMBL" id="CH471109">
    <property type="protein sequence ID" value="EAW94673.1"/>
    <property type="molecule type" value="Genomic_DNA"/>
</dbReference>
<dbReference type="EMBL" id="CH471109">
    <property type="protein sequence ID" value="EAW94674.1"/>
    <property type="molecule type" value="Genomic_DNA"/>
</dbReference>
<dbReference type="EMBL" id="CH471109">
    <property type="protein sequence ID" value="EAW94675.1"/>
    <property type="molecule type" value="Genomic_DNA"/>
</dbReference>
<dbReference type="EMBL" id="BC001269">
    <property type="protein sequence ID" value="AAH01269.1"/>
    <property type="molecule type" value="mRNA"/>
</dbReference>
<dbReference type="EMBL" id="BC003385">
    <property type="protein sequence ID" value="AAH03385.1"/>
    <property type="molecule type" value="mRNA"/>
</dbReference>
<dbReference type="CCDS" id="CCDS11551.1"/>
<dbReference type="RefSeq" id="NP_001007227.1">
    <property type="nucleotide sequence ID" value="NM_001007226.1"/>
</dbReference>
<dbReference type="RefSeq" id="NP_001007228.1">
    <property type="nucleotide sequence ID" value="NM_001007227.1"/>
</dbReference>
<dbReference type="RefSeq" id="NP_001007229.1">
    <property type="nucleotide sequence ID" value="NM_001007228.2"/>
</dbReference>
<dbReference type="RefSeq" id="NP_001007230.1">
    <property type="nucleotide sequence ID" value="NM_001007229.1"/>
</dbReference>
<dbReference type="RefSeq" id="NP_001007231.1">
    <property type="nucleotide sequence ID" value="NM_001007230.1"/>
</dbReference>
<dbReference type="RefSeq" id="NP_001357659.1">
    <property type="nucleotide sequence ID" value="NM_001370730.1"/>
</dbReference>
<dbReference type="RefSeq" id="NP_001357660.1">
    <property type="nucleotide sequence ID" value="NM_001370731.1"/>
</dbReference>
<dbReference type="RefSeq" id="NP_001357661.1">
    <property type="nucleotide sequence ID" value="NM_001370732.1"/>
</dbReference>
<dbReference type="RefSeq" id="NP_003554.1">
    <property type="nucleotide sequence ID" value="NM_003563.3"/>
</dbReference>
<dbReference type="RefSeq" id="XP_005257780.1">
    <property type="nucleotide sequence ID" value="XM_005257723.4"/>
</dbReference>
<dbReference type="RefSeq" id="XP_005257781.1">
    <property type="nucleotide sequence ID" value="XM_005257724.4"/>
</dbReference>
<dbReference type="RefSeq" id="XP_016880693.1">
    <property type="nucleotide sequence ID" value="XM_017025204.1"/>
</dbReference>
<dbReference type="RefSeq" id="XP_024306763.1">
    <property type="nucleotide sequence ID" value="XM_024450995.2"/>
</dbReference>
<dbReference type="RefSeq" id="XP_054173491.1">
    <property type="nucleotide sequence ID" value="XM_054317516.1"/>
</dbReference>
<dbReference type="PDB" id="2CR2">
    <property type="method" value="NMR"/>
    <property type="chains" value="A=28-173"/>
</dbReference>
<dbReference type="PDB" id="3HQH">
    <property type="method" value="X-ray"/>
    <property type="resolution" value="2.30 A"/>
    <property type="chains" value="A=28-166"/>
</dbReference>
<dbReference type="PDB" id="3HQI">
    <property type="method" value="X-ray"/>
    <property type="resolution" value="2.62 A"/>
    <property type="chains" value="A/B=28-329"/>
</dbReference>
<dbReference type="PDB" id="3HQL">
    <property type="method" value="X-ray"/>
    <property type="resolution" value="1.66 A"/>
    <property type="chains" value="A/B=28-166"/>
</dbReference>
<dbReference type="PDB" id="3HQM">
    <property type="method" value="X-ray"/>
    <property type="resolution" value="1.74 A"/>
    <property type="chains" value="A/B=28-166"/>
</dbReference>
<dbReference type="PDB" id="3HSV">
    <property type="method" value="X-ray"/>
    <property type="resolution" value="1.43 A"/>
    <property type="chains" value="A/B=28-166"/>
</dbReference>
<dbReference type="PDB" id="3HTM">
    <property type="method" value="X-ray"/>
    <property type="resolution" value="2.50 A"/>
    <property type="chains" value="A/B/C/D=172-329"/>
</dbReference>
<dbReference type="PDB" id="3HU6">
    <property type="method" value="X-ray"/>
    <property type="resolution" value="2.70 A"/>
    <property type="chains" value="A/B=28-329"/>
</dbReference>
<dbReference type="PDB" id="3IVB">
    <property type="method" value="X-ray"/>
    <property type="resolution" value="1.75 A"/>
    <property type="chains" value="A=28-166"/>
</dbReference>
<dbReference type="PDB" id="3IVQ">
    <property type="method" value="X-ray"/>
    <property type="resolution" value="2.10 A"/>
    <property type="chains" value="A/B=28-166"/>
</dbReference>
<dbReference type="PDB" id="3IVV">
    <property type="method" value="X-ray"/>
    <property type="resolution" value="1.25 A"/>
    <property type="chains" value="A=28-166"/>
</dbReference>
<dbReference type="PDB" id="4EOZ">
    <property type="method" value="X-ray"/>
    <property type="resolution" value="2.40 A"/>
    <property type="chains" value="A/C=177-319"/>
</dbReference>
<dbReference type="PDB" id="4HS2">
    <property type="method" value="X-ray"/>
    <property type="resolution" value="1.53 A"/>
    <property type="chains" value="A=270-374"/>
</dbReference>
<dbReference type="PDB" id="4J8Z">
    <property type="method" value="X-ray"/>
    <property type="resolution" value="2.42 A"/>
    <property type="chains" value="A/B=169-374"/>
</dbReference>
<dbReference type="PDB" id="4O1V">
    <property type="method" value="X-ray"/>
    <property type="resolution" value="2.00 A"/>
    <property type="chains" value="A=28-166"/>
</dbReference>
<dbReference type="PDB" id="6F8F">
    <property type="method" value="X-ray"/>
    <property type="resolution" value="2.00 A"/>
    <property type="chains" value="D=28-166"/>
</dbReference>
<dbReference type="PDB" id="6F8G">
    <property type="method" value="X-ray"/>
    <property type="resolution" value="2.03 A"/>
    <property type="chains" value="A/B/C/D=28-166"/>
</dbReference>
<dbReference type="PDB" id="6I41">
    <property type="method" value="X-ray"/>
    <property type="resolution" value="1.90 A"/>
    <property type="chains" value="A=28-166"/>
</dbReference>
<dbReference type="PDB" id="6I5P">
    <property type="method" value="X-ray"/>
    <property type="resolution" value="1.81 A"/>
    <property type="chains" value="A/C/E/G=28-166"/>
</dbReference>
<dbReference type="PDB" id="6I68">
    <property type="method" value="X-ray"/>
    <property type="resolution" value="1.85 A"/>
    <property type="chains" value="A/C/E/G=28-166"/>
</dbReference>
<dbReference type="PDB" id="6I7A">
    <property type="method" value="X-ray"/>
    <property type="resolution" value="2.20 A"/>
    <property type="chains" value="A/C/E/G=28-166"/>
</dbReference>
<dbReference type="PDB" id="7D3D">
    <property type="method" value="X-ray"/>
    <property type="resolution" value="1.45 A"/>
    <property type="chains" value="A/B=28-166"/>
</dbReference>
<dbReference type="PDB" id="7KLZ">
    <property type="method" value="X-ray"/>
    <property type="resolution" value="3.40 A"/>
    <property type="chains" value="A/B=29-166"/>
</dbReference>
<dbReference type="PDB" id="7LIN">
    <property type="method" value="X-ray"/>
    <property type="resolution" value="1.44 A"/>
    <property type="chains" value="A=29-166"/>
</dbReference>
<dbReference type="PDB" id="7LIO">
    <property type="method" value="X-ray"/>
    <property type="resolution" value="3.01 A"/>
    <property type="chains" value="A/B=29-166"/>
</dbReference>
<dbReference type="PDB" id="7LIP">
    <property type="method" value="X-ray"/>
    <property type="resolution" value="1.48 A"/>
    <property type="chains" value="A=29-166"/>
</dbReference>
<dbReference type="PDB" id="7LIQ">
    <property type="method" value="X-ray"/>
    <property type="resolution" value="1.98 A"/>
    <property type="chains" value="A=29-166"/>
</dbReference>
<dbReference type="PDB" id="8DWS">
    <property type="method" value="EM"/>
    <property type="resolution" value="3.73 A"/>
    <property type="chains" value="A/B/D/E/F/G/H=1-374"/>
</dbReference>
<dbReference type="PDB" id="8DWT">
    <property type="method" value="EM"/>
    <property type="resolution" value="6.20 A"/>
    <property type="chains" value="A/B/C/D/E/F/G/H/I/J/K/L=2-374"/>
</dbReference>
<dbReference type="PDB" id="8DWU">
    <property type="method" value="EM"/>
    <property type="resolution" value="3.40 A"/>
    <property type="chains" value="A/B/C/D/E/F/H/I/J=1-374"/>
</dbReference>
<dbReference type="PDB" id="8DWV">
    <property type="method" value="EM"/>
    <property type="resolution" value="3.60 A"/>
    <property type="chains" value="A/B/E/F/G/H=1-373"/>
</dbReference>
<dbReference type="PDBsum" id="2CR2"/>
<dbReference type="PDBsum" id="3HQH"/>
<dbReference type="PDBsum" id="3HQI"/>
<dbReference type="PDBsum" id="3HQL"/>
<dbReference type="PDBsum" id="3HQM"/>
<dbReference type="PDBsum" id="3HSV"/>
<dbReference type="PDBsum" id="3HTM"/>
<dbReference type="PDBsum" id="3HU6"/>
<dbReference type="PDBsum" id="3IVB"/>
<dbReference type="PDBsum" id="3IVQ"/>
<dbReference type="PDBsum" id="3IVV"/>
<dbReference type="PDBsum" id="4EOZ"/>
<dbReference type="PDBsum" id="4HS2"/>
<dbReference type="PDBsum" id="4J8Z"/>
<dbReference type="PDBsum" id="4O1V"/>
<dbReference type="PDBsum" id="6F8F"/>
<dbReference type="PDBsum" id="6F8G"/>
<dbReference type="PDBsum" id="6I41"/>
<dbReference type="PDBsum" id="6I5P"/>
<dbReference type="PDBsum" id="6I68"/>
<dbReference type="PDBsum" id="6I7A"/>
<dbReference type="PDBsum" id="7D3D"/>
<dbReference type="PDBsum" id="7KLZ"/>
<dbReference type="PDBsum" id="7LIN"/>
<dbReference type="PDBsum" id="7LIO"/>
<dbReference type="PDBsum" id="7LIP"/>
<dbReference type="PDBsum" id="7LIQ"/>
<dbReference type="PDBsum" id="8DWS"/>
<dbReference type="PDBsum" id="8DWT"/>
<dbReference type="PDBsum" id="8DWU"/>
<dbReference type="PDBsum" id="8DWV"/>
<dbReference type="EMDB" id="EMD-27758"/>
<dbReference type="EMDB" id="EMD-27759"/>
<dbReference type="EMDB" id="EMD-27760"/>
<dbReference type="EMDB" id="EMD-27761"/>
<dbReference type="EMDB" id="EMD-3317"/>
<dbReference type="SMR" id="O43791"/>
<dbReference type="BioGRID" id="113993">
    <property type="interactions" value="497"/>
</dbReference>
<dbReference type="ComplexPortal" id="CPX-2300">
    <property type="entry name" value="CRL3 E3 ubiquitin ligase complex, SPOP variant"/>
</dbReference>
<dbReference type="ComplexPortal" id="CPX-8916">
    <property type="entry name" value="CRL3 E3 ubiquitin ligase complex, SPOP-SPOPL variant"/>
</dbReference>
<dbReference type="CORUM" id="O43791"/>
<dbReference type="DIP" id="DIP-50517N"/>
<dbReference type="ELM" id="O43791"/>
<dbReference type="FunCoup" id="O43791">
    <property type="interactions" value="2427"/>
</dbReference>
<dbReference type="IntAct" id="O43791">
    <property type="interactions" value="50"/>
</dbReference>
<dbReference type="MINT" id="O43791"/>
<dbReference type="STRING" id="9606.ENSP00000377001"/>
<dbReference type="BindingDB" id="O43791"/>
<dbReference type="ChEMBL" id="CHEMBL4523140"/>
<dbReference type="GlyGen" id="O43791">
    <property type="glycosylation" value="1 site, 1 O-linked glycan (1 site)"/>
</dbReference>
<dbReference type="iPTMnet" id="O43791"/>
<dbReference type="PhosphoSitePlus" id="O43791"/>
<dbReference type="BioMuta" id="SPOP"/>
<dbReference type="jPOST" id="O43791"/>
<dbReference type="MassIVE" id="O43791"/>
<dbReference type="PaxDb" id="9606-ENSP00000377001"/>
<dbReference type="PeptideAtlas" id="O43791"/>
<dbReference type="ProteomicsDB" id="49171"/>
<dbReference type="Pumba" id="O43791"/>
<dbReference type="Antibodypedia" id="30402">
    <property type="antibodies" value="220 antibodies from 28 providers"/>
</dbReference>
<dbReference type="DNASU" id="8405"/>
<dbReference type="Ensembl" id="ENST00000347630.6">
    <property type="protein sequence ID" value="ENSP00000240327.2"/>
    <property type="gene ID" value="ENSG00000121067.19"/>
</dbReference>
<dbReference type="Ensembl" id="ENST00000393328.6">
    <property type="protein sequence ID" value="ENSP00000377001.2"/>
    <property type="gene ID" value="ENSG00000121067.19"/>
</dbReference>
<dbReference type="Ensembl" id="ENST00000503676.5">
    <property type="protein sequence ID" value="ENSP00000420908.1"/>
    <property type="gene ID" value="ENSG00000121067.19"/>
</dbReference>
<dbReference type="Ensembl" id="ENST00000504102.6">
    <property type="protein sequence ID" value="ENSP00000425905.1"/>
    <property type="gene ID" value="ENSG00000121067.19"/>
</dbReference>
<dbReference type="Ensembl" id="ENST00000509079.6">
    <property type="protein sequence ID" value="ENSP00000426986.2"/>
    <property type="gene ID" value="ENSG00000121067.19"/>
</dbReference>
<dbReference type="Ensembl" id="ENST00000514121.6">
    <property type="protein sequence ID" value="ENSP00000424119.2"/>
    <property type="gene ID" value="ENSG00000121067.19"/>
</dbReference>
<dbReference type="Ensembl" id="ENST00000665825.1">
    <property type="protein sequence ID" value="ENSP00000499562.1"/>
    <property type="gene ID" value="ENSG00000121067.19"/>
</dbReference>
<dbReference type="GeneID" id="8405"/>
<dbReference type="KEGG" id="hsa:8405"/>
<dbReference type="MANE-Select" id="ENST00000504102.6">
    <property type="protein sequence ID" value="ENSP00000425905.1"/>
    <property type="RefSeq nucleotide sequence ID" value="NM_001007228.2"/>
    <property type="RefSeq protein sequence ID" value="NP_001007229.1"/>
</dbReference>
<dbReference type="UCSC" id="uc002ipd.4">
    <property type="organism name" value="human"/>
</dbReference>
<dbReference type="AGR" id="HGNC:11254"/>
<dbReference type="CTD" id="8405"/>
<dbReference type="DisGeNET" id="8405"/>
<dbReference type="GeneCards" id="SPOP"/>
<dbReference type="HGNC" id="HGNC:11254">
    <property type="gene designation" value="SPOP"/>
</dbReference>
<dbReference type="HPA" id="ENSG00000121067">
    <property type="expression patterns" value="Low tissue specificity"/>
</dbReference>
<dbReference type="MalaCards" id="SPOP"/>
<dbReference type="MIM" id="602650">
    <property type="type" value="gene"/>
</dbReference>
<dbReference type="MIM" id="618828">
    <property type="type" value="phenotype"/>
</dbReference>
<dbReference type="MIM" id="618829">
    <property type="type" value="phenotype"/>
</dbReference>
<dbReference type="neXtProt" id="NX_O43791"/>
<dbReference type="OpenTargets" id="ENSG00000121067"/>
<dbReference type="Orphanet" id="662175">
    <property type="disease" value="Macrocephaly-congenital heart disease-facial dysmorphism-intellectual disability syndrome"/>
</dbReference>
<dbReference type="Orphanet" id="662179">
    <property type="disease" value="Microcephaly-hearing loss-facial dysmorphism-intellectual disability syndrome"/>
</dbReference>
<dbReference type="PharmGKB" id="PA36084"/>
<dbReference type="VEuPathDB" id="HostDB:ENSG00000121067"/>
<dbReference type="eggNOG" id="KOG1987">
    <property type="taxonomic scope" value="Eukaryota"/>
</dbReference>
<dbReference type="GeneTree" id="ENSGT00940000154376"/>
<dbReference type="HOGENOM" id="CLU_004253_2_0_1"/>
<dbReference type="InParanoid" id="O43791"/>
<dbReference type="OMA" id="IKFNYMW"/>
<dbReference type="OrthoDB" id="6359816at2759"/>
<dbReference type="PAN-GO" id="O43791">
    <property type="GO annotations" value="5 GO annotations based on evolutionary models"/>
</dbReference>
<dbReference type="PhylomeDB" id="O43791"/>
<dbReference type="TreeFam" id="TF313419"/>
<dbReference type="PathwayCommons" id="O43791"/>
<dbReference type="Reactome" id="R-HSA-5632684">
    <property type="pathway name" value="Hedgehog 'on' state"/>
</dbReference>
<dbReference type="SignaLink" id="O43791"/>
<dbReference type="SIGNOR" id="O43791"/>
<dbReference type="UniPathway" id="UPA00143"/>
<dbReference type="BioGRID-ORCS" id="8405">
    <property type="hits" value="75 hits in 1216 CRISPR screens"/>
</dbReference>
<dbReference type="CD-CODE" id="462A97B5">
    <property type="entry name" value="Leucocyte nuclear body"/>
</dbReference>
<dbReference type="CD-CODE" id="5D403D55">
    <property type="entry name" value="Synthetic Condensate 000119"/>
</dbReference>
<dbReference type="CD-CODE" id="804901D1">
    <property type="entry name" value="Nuclear speckle"/>
</dbReference>
<dbReference type="CD-CODE" id="C93AFFD2">
    <property type="entry name" value="Synthetic Condensate 000131"/>
</dbReference>
<dbReference type="CD-CODE" id="DAD1D2C8">
    <property type="entry name" value="SPOP/DAXX body"/>
</dbReference>
<dbReference type="CD-CODE" id="DFB52F78">
    <property type="entry name" value="Synthetic Condensate 000129"/>
</dbReference>
<dbReference type="ChiTaRS" id="SPOP">
    <property type="organism name" value="human"/>
</dbReference>
<dbReference type="EvolutionaryTrace" id="O43791"/>
<dbReference type="GeneWiki" id="SPOP"/>
<dbReference type="GenomeRNAi" id="8405"/>
<dbReference type="Pharos" id="O43791">
    <property type="development level" value="Tbio"/>
</dbReference>
<dbReference type="PRO" id="PR:O43791"/>
<dbReference type="Proteomes" id="UP000005640">
    <property type="component" value="Chromosome 17"/>
</dbReference>
<dbReference type="RNAct" id="O43791">
    <property type="molecule type" value="protein"/>
</dbReference>
<dbReference type="Bgee" id="ENSG00000121067">
    <property type="expression patterns" value="Expressed in blood vessel layer and 219 other cell types or tissues"/>
</dbReference>
<dbReference type="ExpressionAtlas" id="O43791">
    <property type="expression patterns" value="baseline and differential"/>
</dbReference>
<dbReference type="GO" id="GO:0031463">
    <property type="term" value="C:Cul3-RING ubiquitin ligase complex"/>
    <property type="evidence" value="ECO:0000314"/>
    <property type="project" value="UniProtKB"/>
</dbReference>
<dbReference type="GO" id="GO:0005737">
    <property type="term" value="C:cytoplasm"/>
    <property type="evidence" value="ECO:0000318"/>
    <property type="project" value="GO_Central"/>
</dbReference>
<dbReference type="GO" id="GO:0016607">
    <property type="term" value="C:nuclear speck"/>
    <property type="evidence" value="ECO:0007669"/>
    <property type="project" value="UniProtKB-SubCell"/>
</dbReference>
<dbReference type="GO" id="GO:0005654">
    <property type="term" value="C:nucleoplasm"/>
    <property type="evidence" value="ECO:0000304"/>
    <property type="project" value="Reactome"/>
</dbReference>
<dbReference type="GO" id="GO:0005634">
    <property type="term" value="C:nucleus"/>
    <property type="evidence" value="ECO:0000314"/>
    <property type="project" value="UniProtKB"/>
</dbReference>
<dbReference type="GO" id="GO:0042802">
    <property type="term" value="F:identical protein binding"/>
    <property type="evidence" value="ECO:0000353"/>
    <property type="project" value="IntAct"/>
</dbReference>
<dbReference type="GO" id="GO:0140678">
    <property type="term" value="F:molecular function inhibitor activity"/>
    <property type="evidence" value="ECO:0000269"/>
    <property type="project" value="DisProt"/>
</dbReference>
<dbReference type="GO" id="GO:0031625">
    <property type="term" value="F:ubiquitin protein ligase binding"/>
    <property type="evidence" value="ECO:0000353"/>
    <property type="project" value="UniProtKB"/>
</dbReference>
<dbReference type="GO" id="GO:0043161">
    <property type="term" value="P:proteasome-mediated ubiquitin-dependent protein catabolic process"/>
    <property type="evidence" value="ECO:0000315"/>
    <property type="project" value="UniProtKB"/>
</dbReference>
<dbReference type="GO" id="GO:0000209">
    <property type="term" value="P:protein polyubiquitination"/>
    <property type="evidence" value="ECO:0000314"/>
    <property type="project" value="UniProtKB"/>
</dbReference>
<dbReference type="GO" id="GO:0030162">
    <property type="term" value="P:regulation of proteolysis"/>
    <property type="evidence" value="ECO:0000318"/>
    <property type="project" value="GO_Central"/>
</dbReference>
<dbReference type="CDD" id="cd18518">
    <property type="entry name" value="BACK_SPOP"/>
    <property type="match status" value="1"/>
</dbReference>
<dbReference type="CDD" id="cd18279">
    <property type="entry name" value="BTB_POZ_SPOP-like"/>
    <property type="match status" value="1"/>
</dbReference>
<dbReference type="CDD" id="cd03774">
    <property type="entry name" value="MATH_SPOP"/>
    <property type="match status" value="1"/>
</dbReference>
<dbReference type="FunFam" id="2.60.210.10:FF:000028">
    <property type="entry name" value="Speckle-type POZ protein-like"/>
    <property type="match status" value="1"/>
</dbReference>
<dbReference type="FunFam" id="3.30.710.10:FF:000008">
    <property type="entry name" value="Speckle-type POZ protein-like a"/>
    <property type="match status" value="1"/>
</dbReference>
<dbReference type="Gene3D" id="6.10.250.3030">
    <property type="match status" value="1"/>
</dbReference>
<dbReference type="Gene3D" id="6.20.250.50">
    <property type="match status" value="1"/>
</dbReference>
<dbReference type="Gene3D" id="2.60.210.10">
    <property type="entry name" value="Apoptosis, Tumor Necrosis Factor Receptor Associated Protein 2, Chain A"/>
    <property type="match status" value="1"/>
</dbReference>
<dbReference type="Gene3D" id="3.30.710.10">
    <property type="entry name" value="Potassium Channel Kv1.1, Chain A"/>
    <property type="match status" value="1"/>
</dbReference>
<dbReference type="IDEAL" id="IID00529"/>
<dbReference type="InterPro" id="IPR056423">
    <property type="entry name" value="BACK_BPM_SPOP"/>
</dbReference>
<dbReference type="InterPro" id="IPR000210">
    <property type="entry name" value="BTB/POZ_dom"/>
</dbReference>
<dbReference type="InterPro" id="IPR002083">
    <property type="entry name" value="MATH/TRAF_dom"/>
</dbReference>
<dbReference type="InterPro" id="IPR011333">
    <property type="entry name" value="SKP1/BTB/POZ_sf"/>
</dbReference>
<dbReference type="InterPro" id="IPR034089">
    <property type="entry name" value="SPOP_C"/>
</dbReference>
<dbReference type="InterPro" id="IPR008974">
    <property type="entry name" value="TRAF-like"/>
</dbReference>
<dbReference type="PANTHER" id="PTHR24413">
    <property type="entry name" value="SPECKLE-TYPE POZ PROTEIN"/>
    <property type="match status" value="1"/>
</dbReference>
<dbReference type="Pfam" id="PF24570">
    <property type="entry name" value="BACK_BPM_SPOP"/>
    <property type="match status" value="1"/>
</dbReference>
<dbReference type="Pfam" id="PF00651">
    <property type="entry name" value="BTB"/>
    <property type="match status" value="1"/>
</dbReference>
<dbReference type="Pfam" id="PF22486">
    <property type="entry name" value="MATH_2"/>
    <property type="match status" value="1"/>
</dbReference>
<dbReference type="SMART" id="SM00225">
    <property type="entry name" value="BTB"/>
    <property type="match status" value="1"/>
</dbReference>
<dbReference type="SMART" id="SM00061">
    <property type="entry name" value="MATH"/>
    <property type="match status" value="1"/>
</dbReference>
<dbReference type="SUPFAM" id="SSF54695">
    <property type="entry name" value="POZ domain"/>
    <property type="match status" value="1"/>
</dbReference>
<dbReference type="SUPFAM" id="SSF49599">
    <property type="entry name" value="TRAF domain-like"/>
    <property type="match status" value="1"/>
</dbReference>
<dbReference type="PROSITE" id="PS50097">
    <property type="entry name" value="BTB"/>
    <property type="match status" value="1"/>
</dbReference>
<dbReference type="PROSITE" id="PS50144">
    <property type="entry name" value="MATH"/>
    <property type="match status" value="1"/>
</dbReference>
<comment type="function">
    <text evidence="2 5 7 8 9 10 11 12 13 14 15">Component of a cullin-RING-based BCR (BTB-CUL3-RBX1) E3 ubiquitin-protein ligase complex that mediates the ubiquitination of target proteins, leading most often to their proteasomal degradation. In complex with CUL3, involved in ubiquitination and proteasomal degradation of BRMS1, DAXX, PDX1/IPF1, GLI2 and GLI3. In complex with CUL3, involved in ubiquitination of MACROH2A1 and BMI1; this does not lead to their proteasomal degradation. Inhibits transcriptional activation of PDX1/IPF1 targets, such as insulin, by promoting PDX1/IPF1 degradation. The cullin-RING-based BCR (BTB-CUL3-RBX1) E3 ubiquitin-protein ligase complex containing homodimeric SPOP has higher ubiquitin ligase activity than the complex that contains the heterodimer formed by SPOP and SPOPL. Involved in the regulation of bromodomain and extra-terminal motif (BET) proteins BRD2, BRD3, BRD4 stability (PubMed:32109420). Plays an essential role for proper translation, but not for their degradation, of critical DNA replication licensing factors CDT1 and CDC6, thereby participating in DNA synthesis and cell proliferation (PubMed:36791496). Regulates interferon regulatory factor 1/IRF1 proteasomal turnover by targeting S/T-rich degrons in IRF1 (PubMed:37622993). Facilitates the lysosome-dependent degradation of enterovirus EV71 protease 2A by inducing its 'Lys-48'-linked polyubiquitination, which ultimately restricts EV71 replication (PubMed:37796126). Acts as an antiviral factor also against hepatitis B virus/HBV by promoting ubiquitination and subsequent degradation of HNF1A (PubMed:38018242). In turn, inhibits HBV transcription and replication by preventing HNF1A stimulating activity of HBV preS1 promoter and enhancer II (PubMed:38018242). Involved in ubiquitination of BRDT and promotes its degradation, thereby regulates histone removal in early condensing spermatids prior to histone-to-protamine exchange (By similarity).</text>
</comment>
<comment type="pathway">
    <text evidence="5 7 8 9 10 11 12">Protein modification; protein ubiquitination.</text>
</comment>
<comment type="subunit">
    <text evidence="1 5 6 7 8 9 10 11 13 15">Interacts with GLI2 and GLI3 (By similarity). Homodimer and homooligomer. Heterodimer with SPOPL. Each dimer interacts with two CUL3 molecules. Part of cullin-RING-based BCR (BTB-CUL3-RBX1) E3 ubiquitin-protein ligase complexes that contain CUL3 and homodimeric SPOP, or the heterodimer formed by SPOP and SPOPL, plus a target protein, such as MACROH2A1, PDX1/IPF1, BMI1, BRMS1 and DAXX. Interacts with IRF1; this interaction mediates IRF1 proteasomal degradation (PubMed:37622993). Interacts with HNF1A (PubMed:38018242).</text>
</comment>
<comment type="interaction">
    <interactant intactId="EBI-743549">
        <id>O43791</id>
    </interactant>
    <interactant intactId="EBI-456129">
        <id>Q13618</id>
        <label>CUL3</label>
    </interactant>
    <organismsDiffer>false</organismsDiffer>
    <experiments>8</experiments>
</comment>
<comment type="interaction">
    <interactant intactId="EBI-743549">
        <id>O43791</id>
    </interactant>
    <interactant intactId="EBI-77321">
        <id>Q9UER7</id>
        <label>DAXX</label>
    </interactant>
    <organismsDiffer>false</organismsDiffer>
    <experiments>5</experiments>
</comment>
<comment type="interaction">
    <interactant intactId="EBI-743549">
        <id>O43791</id>
    </interactant>
    <interactant intactId="EBI-1265847">
        <id>Q16829</id>
        <label>DUSP7</label>
    </interactant>
    <organismsDiffer>false</organismsDiffer>
    <experiments>5</experiments>
</comment>
<comment type="interaction">
    <interactant intactId="EBI-743549">
        <id>O43791</id>
    </interactant>
    <interactant intactId="EBI-447677">
        <id>Q99836</id>
        <label>MYD88</label>
    </interactant>
    <organismsDiffer>false</organismsDiffer>
    <experiments>8</experiments>
</comment>
<comment type="interaction">
    <interactant intactId="EBI-743549">
        <id>O43791</id>
    </interactant>
    <interactant intactId="EBI-81196">
        <id>Q9Y6Q9</id>
        <label>NCOA3</label>
    </interactant>
    <organismsDiffer>false</organismsDiffer>
    <experiments>6</experiments>
</comment>
<comment type="interaction">
    <interactant intactId="EBI-743549">
        <id>O43791</id>
    </interactant>
    <interactant intactId="EBI-696162">
        <id>P60484</id>
        <label>PTEN</label>
    </interactant>
    <organismsDiffer>false</organismsDiffer>
    <experiments>4</experiments>
</comment>
<comment type="interaction">
    <interactant intactId="EBI-743549">
        <id>O43791</id>
    </interactant>
    <interactant intactId="EBI-743549">
        <id>O43791</id>
        <label>SPOP</label>
    </interactant>
    <organismsDiffer>false</organismsDiffer>
    <experiments>5</experiments>
</comment>
<comment type="interaction">
    <interactant intactId="EBI-743549">
        <id>O43791</id>
    </interactant>
    <interactant intactId="EBI-2822161">
        <id>Q6IQ16</id>
        <label>SPOPL</label>
    </interactant>
    <organismsDiffer>false</organismsDiffer>
    <experiments>3</experiments>
</comment>
<comment type="subcellular location">
    <subcellularLocation>
        <location evidence="10 13 15">Nucleus</location>
    </subcellularLocation>
    <subcellularLocation>
        <location evidence="7 16">Nucleus speckle</location>
    </subcellularLocation>
    <subcellularLocation>
        <location evidence="15">Cytoplasm</location>
    </subcellularLocation>
</comment>
<comment type="tissue specificity">
    <text evidence="16">Widely expressed.</text>
</comment>
<comment type="domain">
    <text evidence="9">The BTB (POZ) domain mediates dimerization and interaction with CUL3.</text>
</comment>
<comment type="domain">
    <text evidence="9">The MATH domain mediates interaction with protein-ubiquitin ligase substrates, such as MACROH2A1 and BMI1.</text>
</comment>
<comment type="disease" evidence="12">
    <disease id="DI-05805">
        <name>Nabais Sa-de Vries syndrome 1</name>
        <acronym>NSDVS1</acronym>
        <description>An autosomal dominant disorder characterized by global developmental delay, impaired intellectual development, speech delay, and variable behavioral abnormalities. Affected individuals show congenital microcephaly and dysmorphic facial features, including round face, small palpebral fissures, highly arched eyebrows, and short nose.</description>
        <dbReference type="MIM" id="618828"/>
    </disease>
    <text>The disease is caused by variants affecting the gene represented in this entry.</text>
</comment>
<comment type="disease" evidence="12">
    <disease id="DI-05806">
        <name>Nabais Sa-de Vries syndrome 2</name>
        <acronym>NSDVS2</acronym>
        <description>An autosomal dominant disorder characterized by global developmental delay apparent from birth, impaired intellectual development, speech delay, dysmorphic facial features, and additional anomalies including congenital heart defects, sleep disturbances, hypotonia, and variable endocrine abnormalities.</description>
        <dbReference type="MIM" id="618829"/>
    </disease>
    <text>The disease is caused by variants affecting distinct genetic loci, including the gene represented in this entry.</text>
</comment>
<comment type="miscellaneous">
    <text>Antigen recognized by serum from scleroderma patient.</text>
</comment>
<comment type="similarity">
    <text evidence="17">Belongs to the Tdpoz family.</text>
</comment>
<feature type="chain" id="PRO_0000191621" description="Speckle-type POZ protein">
    <location>
        <begin position="1"/>
        <end position="374"/>
    </location>
</feature>
<feature type="domain" description="MATH" evidence="4">
    <location>
        <begin position="31"/>
        <end position="161"/>
    </location>
</feature>
<feature type="domain" description="BTB" evidence="3">
    <location>
        <begin position="173"/>
        <end position="297"/>
    </location>
</feature>
<feature type="region of interest" description="Required for nuclear localization">
    <location>
        <begin position="71"/>
        <end position="191"/>
    </location>
</feature>
<feature type="region of interest" description="Important for binding substrate proteins">
    <location>
        <begin position="123"/>
        <end position="133"/>
    </location>
</feature>
<feature type="region of interest" description="Important for homodimerization">
    <location>
        <begin position="186"/>
        <end position="217"/>
    </location>
</feature>
<feature type="region of interest" description="Important for homodimerization">
    <location>
        <begin position="297"/>
        <end position="355"/>
    </location>
</feature>
<feature type="sequence variant" id="VAR_083851" description="In NSDVS2; dominant-negative, increased BET proteins stability." evidence="12">
    <original>T</original>
    <variation>A</variation>
    <location>
        <position position="25"/>
    </location>
</feature>
<feature type="sequence variant" id="VAR_083852" description="In NSDVS2; dominant-negative, increased BET proteins stability." evidence="12">
    <original>Y</original>
    <variation>C</variation>
    <location>
        <position position="83"/>
    </location>
</feature>
<feature type="sequence variant" id="VAR_083853" description="In NSDVS1; gain-of-function, reduced BET proteins stability." evidence="12">
    <original>R</original>
    <variation>Q</variation>
    <location>
        <position position="121"/>
    </location>
</feature>
<feature type="sequence variant" id="VAR_083854" description="In NSDVS2; dominant-negative, increased BET proteins stability." evidence="12">
    <original>G</original>
    <variation>V</variation>
    <location>
        <position position="132"/>
    </location>
</feature>
<feature type="sequence variant" id="VAR_083855" description="In NSDVS2; dominant-negative, increased BET proteins stability." evidence="12">
    <original>R</original>
    <variation>C</variation>
    <location>
        <position position="138"/>
    </location>
</feature>
<feature type="sequence variant" id="VAR_083856" description="In NSDVS1; gain-of-function, reduced BET proteins stability." evidence="12">
    <original>D</original>
    <variation>N</variation>
    <location>
        <position position="144"/>
    </location>
</feature>
<feature type="mutagenesis site" description="Strongly reduced affinity for substrate proteins." evidence="9">
    <original>Y</original>
    <variation>A</variation>
    <location>
        <position position="87"/>
    </location>
</feature>
<feature type="mutagenesis site" description="Strongly reduced affinity for substrate proteins." evidence="9">
    <original>Y</original>
    <variation>A</variation>
    <location>
        <position position="123"/>
    </location>
</feature>
<feature type="mutagenesis site" description="Strongly reduced affinity for substrate proteins." evidence="9">
    <original>D</original>
    <variation>A</variation>
    <location>
        <position position="130"/>
    </location>
</feature>
<feature type="mutagenesis site" description="Strongly reduced affinity for substrate proteins." evidence="9">
    <original>W</original>
    <variation>A</variation>
    <location>
        <position position="131"/>
    </location>
</feature>
<feature type="mutagenesis site" description="Strongly reduced affinity for substrate proteins." evidence="9">
    <original>F</original>
    <variation>A</variation>
    <location>
        <position position="133"/>
    </location>
</feature>
<feature type="mutagenesis site" description="Strongly reduced homodimerization. Reduces the activity of the cullin-RING-based BCR (BTB-CUL3-RBX1) E3 ubiquitin-protein ligase complex." evidence="9">
    <original>L</original>
    <variation>D</variation>
    <location>
        <position position="186"/>
    </location>
</feature>
<feature type="mutagenesis site" description="Strongly reduced homodimerization. Reduces the activity of the cullin-RING-based BCR (BTB-CUL3-RBX1) E3 ubiquitin-protein ligase complex." evidence="9">
    <original>L</original>
    <variation>D</variation>
    <location>
        <position position="190"/>
    </location>
</feature>
<feature type="mutagenesis site" description="Strongly reduced homodimerization. Reduces the activity of the cullin-RING-based BCR (BTB-CUL3-RBX1) E3 ubiquitin-protein ligase complex." evidence="9">
    <original>L</original>
    <variation>D</variation>
    <location>
        <position position="193"/>
    </location>
</feature>
<feature type="mutagenesis site" description="Strongly reduced homodimerization. Reduces the activity of the cullin-RING-based BCR (BTB-CUL3-RBX1) E3 ubiquitin-protein ligase complex." evidence="9">
    <original>I</original>
    <variation>K</variation>
    <location>
        <position position="217"/>
    </location>
</feature>
<feature type="sequence conflict" description="In Ref. 3; BAD96309." evidence="17" ref="3">
    <original>N</original>
    <variation>S</variation>
    <location>
        <position position="239"/>
    </location>
</feature>
<feature type="strand" evidence="20">
    <location>
        <begin position="31"/>
        <end position="40"/>
    </location>
</feature>
<feature type="helix" evidence="20">
    <location>
        <begin position="41"/>
        <end position="43"/>
    </location>
</feature>
<feature type="helix" evidence="19">
    <location>
        <begin position="45"/>
        <end position="48"/>
    </location>
</feature>
<feature type="strand" evidence="23">
    <location>
        <begin position="50"/>
        <end position="53"/>
    </location>
</feature>
<feature type="strand" evidence="20">
    <location>
        <begin position="57"/>
        <end position="60"/>
    </location>
</feature>
<feature type="helix" evidence="20">
    <location>
        <begin position="61"/>
        <end position="63"/>
    </location>
</feature>
<feature type="strand" evidence="20">
    <location>
        <begin position="65"/>
        <end position="72"/>
    </location>
</feature>
<feature type="helix" evidence="20">
    <location>
        <begin position="78"/>
        <end position="80"/>
    </location>
</feature>
<feature type="strand" evidence="20">
    <location>
        <begin position="83"/>
        <end position="92"/>
    </location>
</feature>
<feature type="strand" evidence="20">
    <location>
        <begin position="94"/>
        <end position="107"/>
    </location>
</feature>
<feature type="strand" evidence="25">
    <location>
        <begin position="109"/>
        <end position="111"/>
    </location>
</feature>
<feature type="strand" evidence="20">
    <location>
        <begin position="113"/>
        <end position="118"/>
    </location>
</feature>
<feature type="strand" evidence="20">
    <location>
        <begin position="123"/>
        <end position="126"/>
    </location>
</feature>
<feature type="strand" evidence="20">
    <location>
        <begin position="130"/>
        <end position="138"/>
    </location>
</feature>
<feature type="helix" evidence="20">
    <location>
        <begin position="139"/>
        <end position="143"/>
    </location>
</feature>
<feature type="helix" evidence="20">
    <location>
        <begin position="145"/>
        <end position="147"/>
    </location>
</feature>
<feature type="strand" evidence="24">
    <location>
        <begin position="148"/>
        <end position="150"/>
    </location>
</feature>
<feature type="helix" evidence="20">
    <location>
        <begin position="151"/>
        <end position="153"/>
    </location>
</feature>
<feature type="strand" evidence="20">
    <location>
        <begin position="155"/>
        <end position="163"/>
    </location>
</feature>
<feature type="helix" evidence="21">
    <location>
        <begin position="186"/>
        <end position="196"/>
    </location>
</feature>
<feature type="strand" evidence="21">
    <location>
        <begin position="202"/>
        <end position="206"/>
    </location>
</feature>
<feature type="strand" evidence="21">
    <location>
        <begin position="209"/>
        <end position="213"/>
    </location>
</feature>
<feature type="helix" evidence="21">
    <location>
        <begin position="215"/>
        <end position="221"/>
    </location>
</feature>
<feature type="helix" evidence="21">
    <location>
        <begin position="223"/>
        <end position="230"/>
    </location>
</feature>
<feature type="strand" evidence="21">
    <location>
        <begin position="231"/>
        <end position="233"/>
    </location>
</feature>
<feature type="helix" evidence="21">
    <location>
        <begin position="234"/>
        <end position="238"/>
    </location>
</feature>
<feature type="strand" evidence="21">
    <location>
        <begin position="240"/>
        <end position="243"/>
    </location>
</feature>
<feature type="helix" evidence="21">
    <location>
        <begin position="248"/>
        <end position="260"/>
    </location>
</feature>
<feature type="helix" evidence="21">
    <location>
        <begin position="266"/>
        <end position="268"/>
    </location>
</feature>
<feature type="helix" evidence="21">
    <location>
        <begin position="270"/>
        <end position="279"/>
    </location>
</feature>
<feature type="helix" evidence="21">
    <location>
        <begin position="283"/>
        <end position="290"/>
    </location>
</feature>
<feature type="turn" evidence="22">
    <location>
        <begin position="299"/>
        <end position="301"/>
    </location>
</feature>
<feature type="helix" evidence="22">
    <location>
        <begin position="302"/>
        <end position="311"/>
    </location>
</feature>
<feature type="helix" evidence="22">
    <location>
        <begin position="315"/>
        <end position="327"/>
    </location>
</feature>
<feature type="helix" evidence="22">
    <location>
        <begin position="329"/>
        <end position="332"/>
    </location>
</feature>
<feature type="helix" evidence="22">
    <location>
        <begin position="336"/>
        <end position="344"/>
    </location>
</feature>
<feature type="helix" evidence="22">
    <location>
        <begin position="346"/>
        <end position="357"/>
    </location>
</feature>
<protein>
    <recommendedName>
        <fullName evidence="17">Speckle-type POZ protein</fullName>
    </recommendedName>
    <alternativeName>
        <fullName>HIB homolog 1</fullName>
    </alternativeName>
    <alternativeName>
        <fullName>Roadkill homolog 1</fullName>
    </alternativeName>
</protein>
<organism>
    <name type="scientific">Homo sapiens</name>
    <name type="common">Human</name>
    <dbReference type="NCBI Taxonomy" id="9606"/>
    <lineage>
        <taxon>Eukaryota</taxon>
        <taxon>Metazoa</taxon>
        <taxon>Chordata</taxon>
        <taxon>Craniata</taxon>
        <taxon>Vertebrata</taxon>
        <taxon>Euteleostomi</taxon>
        <taxon>Mammalia</taxon>
        <taxon>Eutheria</taxon>
        <taxon>Euarchontoglires</taxon>
        <taxon>Primates</taxon>
        <taxon>Haplorrhini</taxon>
        <taxon>Catarrhini</taxon>
        <taxon>Hominidae</taxon>
        <taxon>Homo</taxon>
    </lineage>
</organism>
<name>SPOP_HUMAN</name>
<reference key="1">
    <citation type="journal article" date="1997" name="FEBS Lett.">
        <title>Identification of a novel nuclear speckle-type protein, SPOP.</title>
        <authorList>
            <person name="Nagai Y."/>
            <person name="Kojima T."/>
            <person name="Muro Y."/>
            <person name="Hachiya T."/>
            <person name="Nishizawa Y."/>
            <person name="Wakabayashi T."/>
            <person name="Hagiwara M."/>
        </authorList>
    </citation>
    <scope>NUCLEOTIDE SEQUENCE [MRNA]</scope>
    <scope>SUBCELLULAR LOCATION</scope>
    <scope>TISSUE SPECIFICITY</scope>
</reference>
<reference key="2">
    <citation type="journal article" date="2004" name="Nat. Genet.">
        <title>Complete sequencing and characterization of 21,243 full-length human cDNAs.</title>
        <authorList>
            <person name="Ota T."/>
            <person name="Suzuki Y."/>
            <person name="Nishikawa T."/>
            <person name="Otsuki T."/>
            <person name="Sugiyama T."/>
            <person name="Irie R."/>
            <person name="Wakamatsu A."/>
            <person name="Hayashi K."/>
            <person name="Sato H."/>
            <person name="Nagai K."/>
            <person name="Kimura K."/>
            <person name="Makita H."/>
            <person name="Sekine M."/>
            <person name="Obayashi M."/>
            <person name="Nishi T."/>
            <person name="Shibahara T."/>
            <person name="Tanaka T."/>
            <person name="Ishii S."/>
            <person name="Yamamoto J."/>
            <person name="Saito K."/>
            <person name="Kawai Y."/>
            <person name="Isono Y."/>
            <person name="Nakamura Y."/>
            <person name="Nagahari K."/>
            <person name="Murakami K."/>
            <person name="Yasuda T."/>
            <person name="Iwayanagi T."/>
            <person name="Wagatsuma M."/>
            <person name="Shiratori A."/>
            <person name="Sudo H."/>
            <person name="Hosoiri T."/>
            <person name="Kaku Y."/>
            <person name="Kodaira H."/>
            <person name="Kondo H."/>
            <person name="Sugawara M."/>
            <person name="Takahashi M."/>
            <person name="Kanda K."/>
            <person name="Yokoi T."/>
            <person name="Furuya T."/>
            <person name="Kikkawa E."/>
            <person name="Omura Y."/>
            <person name="Abe K."/>
            <person name="Kamihara K."/>
            <person name="Katsuta N."/>
            <person name="Sato K."/>
            <person name="Tanikawa M."/>
            <person name="Yamazaki M."/>
            <person name="Ninomiya K."/>
            <person name="Ishibashi T."/>
            <person name="Yamashita H."/>
            <person name="Murakawa K."/>
            <person name="Fujimori K."/>
            <person name="Tanai H."/>
            <person name="Kimata M."/>
            <person name="Watanabe M."/>
            <person name="Hiraoka S."/>
            <person name="Chiba Y."/>
            <person name="Ishida S."/>
            <person name="Ono Y."/>
            <person name="Takiguchi S."/>
            <person name="Watanabe S."/>
            <person name="Yosida M."/>
            <person name="Hotuta T."/>
            <person name="Kusano J."/>
            <person name="Kanehori K."/>
            <person name="Takahashi-Fujii A."/>
            <person name="Hara H."/>
            <person name="Tanase T.-O."/>
            <person name="Nomura Y."/>
            <person name="Togiya S."/>
            <person name="Komai F."/>
            <person name="Hara R."/>
            <person name="Takeuchi K."/>
            <person name="Arita M."/>
            <person name="Imose N."/>
            <person name="Musashino K."/>
            <person name="Yuuki H."/>
            <person name="Oshima A."/>
            <person name="Sasaki N."/>
            <person name="Aotsuka S."/>
            <person name="Yoshikawa Y."/>
            <person name="Matsunawa H."/>
            <person name="Ichihara T."/>
            <person name="Shiohata N."/>
            <person name="Sano S."/>
            <person name="Moriya S."/>
            <person name="Momiyama H."/>
            <person name="Satoh N."/>
            <person name="Takami S."/>
            <person name="Terashima Y."/>
            <person name="Suzuki O."/>
            <person name="Nakagawa S."/>
            <person name="Senoh A."/>
            <person name="Mizoguchi H."/>
            <person name="Goto Y."/>
            <person name="Shimizu F."/>
            <person name="Wakebe H."/>
            <person name="Hishigaki H."/>
            <person name="Watanabe T."/>
            <person name="Sugiyama A."/>
            <person name="Takemoto M."/>
            <person name="Kawakami B."/>
            <person name="Yamazaki M."/>
            <person name="Watanabe K."/>
            <person name="Kumagai A."/>
            <person name="Itakura S."/>
            <person name="Fukuzumi Y."/>
            <person name="Fujimori Y."/>
            <person name="Komiyama M."/>
            <person name="Tashiro H."/>
            <person name="Tanigami A."/>
            <person name="Fujiwara T."/>
            <person name="Ono T."/>
            <person name="Yamada K."/>
            <person name="Fujii Y."/>
            <person name="Ozaki K."/>
            <person name="Hirao M."/>
            <person name="Ohmori Y."/>
            <person name="Kawabata A."/>
            <person name="Hikiji T."/>
            <person name="Kobatake N."/>
            <person name="Inagaki H."/>
            <person name="Ikema Y."/>
            <person name="Okamoto S."/>
            <person name="Okitani R."/>
            <person name="Kawakami T."/>
            <person name="Noguchi S."/>
            <person name="Itoh T."/>
            <person name="Shigeta K."/>
            <person name="Senba T."/>
            <person name="Matsumura K."/>
            <person name="Nakajima Y."/>
            <person name="Mizuno T."/>
            <person name="Morinaga M."/>
            <person name="Sasaki M."/>
            <person name="Togashi T."/>
            <person name="Oyama M."/>
            <person name="Hata H."/>
            <person name="Watanabe M."/>
            <person name="Komatsu T."/>
            <person name="Mizushima-Sugano J."/>
            <person name="Satoh T."/>
            <person name="Shirai Y."/>
            <person name="Takahashi Y."/>
            <person name="Nakagawa K."/>
            <person name="Okumura K."/>
            <person name="Nagase T."/>
            <person name="Nomura N."/>
            <person name="Kikuchi H."/>
            <person name="Masuho Y."/>
            <person name="Yamashita R."/>
            <person name="Nakai K."/>
            <person name="Yada T."/>
            <person name="Nakamura Y."/>
            <person name="Ohara O."/>
            <person name="Isogai T."/>
            <person name="Sugano S."/>
        </authorList>
    </citation>
    <scope>NUCLEOTIDE SEQUENCE [LARGE SCALE MRNA]</scope>
</reference>
<reference key="3">
    <citation type="submission" date="2005-04" db="EMBL/GenBank/DDBJ databases">
        <authorList>
            <person name="Suzuki Y."/>
            <person name="Sugano S."/>
            <person name="Totoki Y."/>
            <person name="Toyoda A."/>
            <person name="Takeda T."/>
            <person name="Sakaki Y."/>
            <person name="Tanaka A."/>
            <person name="Yokoyama S."/>
        </authorList>
    </citation>
    <scope>NUCLEOTIDE SEQUENCE [LARGE SCALE MRNA]</scope>
    <source>
        <tissue>Coronary artery</tissue>
    </source>
</reference>
<reference key="4">
    <citation type="submission" date="2005-09" db="EMBL/GenBank/DDBJ databases">
        <authorList>
            <person name="Mural R.J."/>
            <person name="Istrail S."/>
            <person name="Sutton G.G."/>
            <person name="Florea L."/>
            <person name="Halpern A.L."/>
            <person name="Mobarry C.M."/>
            <person name="Lippert R."/>
            <person name="Walenz B."/>
            <person name="Shatkay H."/>
            <person name="Dew I."/>
            <person name="Miller J.R."/>
            <person name="Flanigan M.J."/>
            <person name="Edwards N.J."/>
            <person name="Bolanos R."/>
            <person name="Fasulo D."/>
            <person name="Halldorsson B.V."/>
            <person name="Hannenhalli S."/>
            <person name="Turner R."/>
            <person name="Yooseph S."/>
            <person name="Lu F."/>
            <person name="Nusskern D.R."/>
            <person name="Shue B.C."/>
            <person name="Zheng X.H."/>
            <person name="Zhong F."/>
            <person name="Delcher A.L."/>
            <person name="Huson D.H."/>
            <person name="Kravitz S.A."/>
            <person name="Mouchard L."/>
            <person name="Reinert K."/>
            <person name="Remington K.A."/>
            <person name="Clark A.G."/>
            <person name="Waterman M.S."/>
            <person name="Eichler E.E."/>
            <person name="Adams M.D."/>
            <person name="Hunkapiller M.W."/>
            <person name="Myers E.W."/>
            <person name="Venter J.C."/>
        </authorList>
    </citation>
    <scope>NUCLEOTIDE SEQUENCE [LARGE SCALE GENOMIC DNA]</scope>
</reference>
<reference key="5">
    <citation type="journal article" date="2004" name="Genome Res.">
        <title>The status, quality, and expansion of the NIH full-length cDNA project: the Mammalian Gene Collection (MGC).</title>
        <authorList>
            <consortium name="The MGC Project Team"/>
        </authorList>
    </citation>
    <scope>NUCLEOTIDE SEQUENCE [LARGE SCALE MRNA]</scope>
    <source>
        <tissue>Cervix</tissue>
        <tissue>Placenta</tissue>
    </source>
</reference>
<reference key="6">
    <citation type="journal article" date="2003" name="Nat. Cell Biol.">
        <title>Targeting of protein ubiquitination by BTB-Cullin 3-Roc1 ubiquitin ligases.</title>
        <authorList>
            <person name="Furukawa M."/>
            <person name="He Y.J."/>
            <person name="Borchers C."/>
            <person name="Xiong Y."/>
        </authorList>
    </citation>
    <scope>FUNCTION AS AN E3 UBIQUITIN-PROTEIN LIGASE</scope>
    <scope>INTERACTION WITH CUL3</scope>
</reference>
<reference key="7">
    <citation type="journal article" date="2004" name="Biochem. Biophys. Res. Commun.">
        <title>Daxx-mediated transcriptional repression of MMP1 gene is reversed by SPOP.</title>
        <authorList>
            <person name="La M."/>
            <person name="Kim K."/>
            <person name="Park J."/>
            <person name="Won J."/>
            <person name="Lee J.-H."/>
            <person name="Fu Y.M."/>
            <person name="Meadows G.G."/>
            <person name="Joe C.O."/>
        </authorList>
    </citation>
    <scope>INTERACTION WITH DAXX</scope>
    <scope>HOMODIMERIZATION</scope>
</reference>
<reference key="8">
    <citation type="journal article" date="2005" name="Proc. Natl. Acad. Sci. U.S.A.">
        <title>Stable X chromosome inactivation involves the PRC1 Polycomb complex and requires histone MACROH2A1 and the CULLIN3/SPOP ubiquitin E3 ligase.</title>
        <authorList>
            <person name="Hernandez-Munoz I."/>
            <person name="Lund A.H."/>
            <person name="van der Stoop P."/>
            <person name="Boutsma E."/>
            <person name="Muijrers I."/>
            <person name="Verhoeven E."/>
            <person name="Nusinow D.A."/>
            <person name="Panning B."/>
            <person name="Marahrens Y."/>
            <person name="van Lohuizen M."/>
        </authorList>
    </citation>
    <scope>INTERACTION WITH BMI1</scope>
    <scope>IDENTIFICATION IN A COMPLEX WITH CUL3 AND BMI1</scope>
    <scope>IDENTIFICATION IN A COMPLEX WITH CUL3 AND MACROH2A1</scope>
    <scope>SUBCELLULAR LOCATION</scope>
    <scope>FUNCTION</scope>
</reference>
<reference key="9">
    <citation type="journal article" date="2006" name="Development">
        <title>Roadkill attenuates Hedgehog responses through degradation of Cubitus interruptus.</title>
        <authorList>
            <person name="Kent D."/>
            <person name="Bush E.W."/>
            <person name="Hooper J.E."/>
        </authorList>
    </citation>
    <scope>IDENTIFICATION</scope>
</reference>
<reference key="10">
    <citation type="journal article" date="2006" name="Dev. Cell">
        <title>A hedgehog-induced BTB protein modulates hedgehog signaling by degrading Ci/Gli transcription factor.</title>
        <authorList>
            <person name="Zhang Q."/>
            <person name="Zhang L."/>
            <person name="Wang B."/>
            <person name="Ou C.-Y."/>
            <person name="Chien C.-T."/>
            <person name="Jiang J."/>
        </authorList>
    </citation>
    <scope>IDENTIFICATION</scope>
</reference>
<reference key="11">
    <citation type="journal article" date="2006" name="J. Biol. Chem.">
        <title>BTB domain-containing speckle-type POZ protein (SPOP) serves as an adaptor of Daxx for ubiquitination by Cul3-based ubiquitin ligase.</title>
        <authorList>
            <person name="Kwon J.E."/>
            <person name="La M."/>
            <person name="Oh K.H."/>
            <person name="Oh Y.M."/>
            <person name="Kim G.R."/>
            <person name="Seol J.H."/>
            <person name="Baek S.H."/>
            <person name="Chiba T."/>
            <person name="Tanaka K."/>
            <person name="Bang O.S."/>
            <person name="Joe C.O."/>
            <person name="Chung C.H."/>
        </authorList>
    </citation>
    <scope>IDENTIFICATION IN A COMPLEX WITH CUL3 AND DAXX</scope>
    <scope>FUNCTION</scope>
</reference>
<reference key="12">
    <citation type="journal article" date="2011" name="Biochem. Biophys. Res. Commun.">
        <title>Breast cancer metastasis suppressor 1 (BRMS1) is destabilized by the Cul3-SPOP E3 ubiquitin ligase complex.</title>
        <authorList>
            <person name="Kim B."/>
            <person name="Nam H.J."/>
            <person name="Pyo K.E."/>
            <person name="Jang M.J."/>
            <person name="Kim I.S."/>
            <person name="Kim D."/>
            <person name="Boo K."/>
            <person name="Lee S.H."/>
            <person name="Yoon J.B."/>
            <person name="Baek S.H."/>
            <person name="Kim J.H."/>
        </authorList>
    </citation>
    <scope>FUNCTION</scope>
    <scope>SUBCELLULAR LOCATION</scope>
    <scope>INTERACTION WITH BRMS1</scope>
    <scope>IDENTIFICATION IN A COMPLEX WITH CUL3 AND BRMS1</scope>
</reference>
<reference key="13">
    <citation type="journal article" date="2023" name="Biochem. Biophys. Res. Commun.">
        <title>SPOP is essential for DNA replication licensing through maintaining translation of CDT1 and CDC6 in HaCaT cells.</title>
        <authorList>
            <person name="Sanada S."/>
            <person name="Maekawa M."/>
            <person name="Tate S."/>
            <person name="Nakaoka H."/>
            <person name="Fujisawa Y."/>
            <person name="Sayama K."/>
            <person name="Higashiyama S."/>
        </authorList>
    </citation>
    <scope>FUNCTION</scope>
</reference>
<reference key="14">
    <citation type="journal article" date="2023" name="Elife">
        <title>SPOP targets the immune transcription factor IRF1 for proteasomal degradation.</title>
        <authorList>
            <person name="Schwartz I."/>
            <person name="Vunjak M."/>
            <person name="Budroni V."/>
            <person name="Cantoran Garcia A."/>
            <person name="Mastrovito M."/>
            <person name="Soderholm A."/>
            <person name="Hinterndorfer M."/>
            <person name="de Almeida M."/>
            <person name="Hacker K."/>
            <person name="Wang J."/>
            <person name="Froussios K."/>
            <person name="Jude J."/>
            <person name="Decker T."/>
            <person name="Zuber J."/>
            <person name="Versteeg G.A."/>
        </authorList>
    </citation>
    <scope>FUNCTION</scope>
    <scope>SUBCELLULAR LOCATION</scope>
    <scope>INTERACTION WITH IRF1</scope>
</reference>
<reference key="15">
    <citation type="journal article" date="2023" name="J. Virol.">
        <title>Ubiquitin E3 ligase SPOP is a host negative regulator of enterovirus 71-encoded 2A protease.</title>
        <authorList>
            <person name="Zang L."/>
            <person name="Yang X."/>
            <person name="Chen Y."/>
            <person name="Huang F."/>
            <person name="Yuan Y."/>
            <person name="Chen X."/>
            <person name="Zuo Y."/>
            <person name="Miao Y."/>
            <person name="Gu J."/>
            <person name="Guo H."/>
            <person name="Xia W."/>
            <person name="Peng Y."/>
            <person name="Tang M."/>
            <person name="Huang Z."/>
            <person name="Wang Y."/>
            <person name="Ma J."/>
            <person name="Jiang J."/>
            <person name="Zhou W."/>
            <person name="Zheng H."/>
            <person name="Shi W."/>
        </authorList>
    </citation>
    <scope>FUNCTION</scope>
    <scope>INTERACTION WITH ENTEROVIRUS EV71 PROTEASE 2A (MICROBIAL INFECTION)</scope>
</reference>
<reference key="16">
    <citation type="journal article" date="2023" name="J. Med. Virol.">
        <title>SPOP inhibits HBV transcription and replication by ubiquitination and degradation of HNF1alpha.</title>
        <authorList>
            <person name="Pi Y."/>
            <person name="Li Y."/>
            <person name="Yan Q."/>
            <person name="Luo H."/>
            <person name="Zhou P."/>
            <person name="Chang W."/>
            <person name="Gong D."/>
            <person name="Hu Y."/>
            <person name="Wang K."/>
            <person name="Tang N."/>
            <person name="Huang A."/>
            <person name="Chen Y."/>
        </authorList>
    </citation>
    <scope>FUNCTION</scope>
    <scope>INTERACTION WITH HNF1A</scope>
    <scope>SUBCELLULAR LOCATION</scope>
</reference>
<reference key="17">
    <citation type="submission" date="2005-11" db="PDB data bank">
        <title>Solution structure of N-terminal domain of speckle-type POZ protein.</title>
        <authorList>
            <consortium name="RIKEN structural genomics initiative (RSGI)"/>
        </authorList>
    </citation>
    <scope>STRUCTURE BY NMR OF 28-173</scope>
</reference>
<reference key="18">
    <citation type="journal article" date="2009" name="Mol. Cell">
        <title>Structures of SPOP-substrate complexes: insights into molecular architectures of BTB-Cul3 ubiquitin ligases.</title>
        <authorList>
            <person name="Zhuang M."/>
            <person name="Calabrese M.F."/>
            <person name="Liu J."/>
            <person name="Waddell M.B."/>
            <person name="Nourse A."/>
            <person name="Hammel M."/>
            <person name="Miller D.J."/>
            <person name="Walden H."/>
            <person name="Duda D.M."/>
            <person name="Seyedin S.N."/>
            <person name="Hoggard T."/>
            <person name="Harper J.W."/>
            <person name="White K.P."/>
            <person name="Schulman B.A."/>
        </authorList>
    </citation>
    <scope>X-RAY CRYSTALLOGRAPHY (1.25 ANGSTROMS) OF 28-166 IN COMPLEXES WITH MACROH2A1 AND SUBSTRATE PEPTIDES</scope>
    <scope>INTERACTION WITH CUL3; MACROH2A1 AND DAXX</scope>
    <scope>SUBUNIT</scope>
    <scope>FUNCTION</scope>
    <scope>DOMAIN</scope>
    <scope>MUTAGENESIS OF TYR-87; TYR-123; ASP-130; TRP-131; PHE-133; LEU-186; LEU-190; LEU-193 AND ILE-217</scope>
    <scope>IDENTIFICATION BY MASS SPECTROMETRY</scope>
</reference>
<reference key="19">
    <citation type="journal article" date="2012" name="Structure">
        <title>Adaptor protein self-assembly drives the control of a cullin-RING ubiquitin ligase.</title>
        <authorList>
            <person name="Errington W.J."/>
            <person name="Khan M.Q."/>
            <person name="Bueler S.A."/>
            <person name="Rubinstein J.L."/>
            <person name="Chakrabartty A."/>
            <person name="Prive G.G."/>
        </authorList>
    </citation>
    <scope>X-RAY CRYSTALLOGRAPHY (2.40 ANGSTROMS) OF 177-319 IN COMPLEX WITH CUL3</scope>
    <scope>FUNCTION</scope>
    <scope>INTERACTION WITH CUL3 AND MACROH2A1</scope>
    <scope>SUBUNIT</scope>
</reference>
<reference key="20">
    <citation type="journal article" date="2020" name="Am. J. Hum. Genet.">
        <title>De Novo Variants in SPOP Cause Two Clinically Distinct Neurodevelopmental Disorders.</title>
        <authorList>
            <person name="Nabais Sa M.J."/>
            <person name="El Tekle G."/>
            <person name="de Brouwer A.P.M."/>
            <person name="Sawyer S.L."/>
            <person name="Del Gaudio D."/>
            <person name="Parker M.J."/>
            <person name="Kanani F."/>
            <person name="van den Boogaard M.H."/>
            <person name="van Gassen K."/>
            <person name="Van Allen M.I."/>
            <person name="Wierenga K."/>
            <person name="Purcarin G."/>
            <person name="Elias E.R."/>
            <person name="Begtrup A."/>
            <person name="Keller-Ramey J."/>
            <person name="Bernasocchi T."/>
            <person name="van de Wiel L."/>
            <person name="Gilissen C."/>
            <person name="Venselaar H."/>
            <person name="Pfundt R."/>
            <person name="Vissers L.E.L.M."/>
            <person name="Theurillat J.P."/>
            <person name="de Vries B.B.A."/>
        </authorList>
    </citation>
    <scope>VARIANTS NSDVS2 ALA-25; CYS-83; VAL-132 AND CYS-138</scope>
    <scope>CHARACTERIZATION OF VARIANTS NSDVS2 ALA-25; CYS-83; VAL-132 AND CYS-138</scope>
    <scope>VARIANTS NSDVS1 GLN-121 AND ASN-144</scope>
    <scope>CHARACTERIZATION OF VARIANTS NSDVS1 GLN-121 AND ASN-144</scope>
    <scope>FUNCTION</scope>
</reference>